<sequence length="242" mass="25896">MEPKYQRILIKLSGEALAGEKGVGIDIPTVQAIAKEIAEVHVSGVQIALVIGGGNLWRGEPAADAGMDRVQADYTGMLGTVMNALVMADSLQHYGVDTRVQTAIPMQNVAEPYIRGRALRHLEKNRIVVFGAGIGSPYFSTDTTAALRAAEIEADAILMAKNGVDGVYNADPKKDANAVKFDELTHGEVIKRGLKIMDATASTLSMDNDIDLVVFNMNEAGNIQRVVFGEHIGTTVSNKVCD</sequence>
<reference key="1">
    <citation type="journal article" date="2006" name="Proc. Natl. Acad. Sci. U.S.A.">
        <title>Molecular genetic anatomy of inter- and intraserotype variation in the human bacterial pathogen group A Streptococcus.</title>
        <authorList>
            <person name="Beres S.B."/>
            <person name="Richter E.W."/>
            <person name="Nagiec M.J."/>
            <person name="Sumby P."/>
            <person name="Porcella S.F."/>
            <person name="DeLeo F.R."/>
            <person name="Musser J.M."/>
        </authorList>
    </citation>
    <scope>NUCLEOTIDE SEQUENCE [LARGE SCALE GENOMIC DNA]</scope>
    <source>
        <strain>MGAS9429</strain>
    </source>
</reference>
<comment type="function">
    <text evidence="1">Catalyzes the reversible phosphorylation of UMP to UDP.</text>
</comment>
<comment type="catalytic activity">
    <reaction evidence="1">
        <text>UMP + ATP = UDP + ADP</text>
        <dbReference type="Rhea" id="RHEA:24400"/>
        <dbReference type="ChEBI" id="CHEBI:30616"/>
        <dbReference type="ChEBI" id="CHEBI:57865"/>
        <dbReference type="ChEBI" id="CHEBI:58223"/>
        <dbReference type="ChEBI" id="CHEBI:456216"/>
        <dbReference type="EC" id="2.7.4.22"/>
    </reaction>
</comment>
<comment type="activity regulation">
    <text evidence="1">Allosterically activated by GTP. Inhibited by UTP.</text>
</comment>
<comment type="pathway">
    <text evidence="1">Pyrimidine metabolism; CTP biosynthesis via de novo pathway; UDP from UMP (UMPK route): step 1/1.</text>
</comment>
<comment type="subunit">
    <text evidence="1">Homohexamer.</text>
</comment>
<comment type="subcellular location">
    <subcellularLocation>
        <location evidence="1">Cytoplasm</location>
    </subcellularLocation>
</comment>
<comment type="similarity">
    <text evidence="1">Belongs to the UMP kinase family.</text>
</comment>
<proteinExistence type="inferred from homology"/>
<keyword id="KW-0021">Allosteric enzyme</keyword>
<keyword id="KW-0067">ATP-binding</keyword>
<keyword id="KW-0963">Cytoplasm</keyword>
<keyword id="KW-0418">Kinase</keyword>
<keyword id="KW-0547">Nucleotide-binding</keyword>
<keyword id="KW-0665">Pyrimidine biosynthesis</keyword>
<keyword id="KW-0808">Transferase</keyword>
<accession>Q1JN32</accession>
<dbReference type="EC" id="2.7.4.22" evidence="1"/>
<dbReference type="EMBL" id="CP000259">
    <property type="protein sequence ID" value="ABF31567.1"/>
    <property type="molecule type" value="Genomic_DNA"/>
</dbReference>
<dbReference type="RefSeq" id="WP_002985765.1">
    <property type="nucleotide sequence ID" value="NC_008021.1"/>
</dbReference>
<dbReference type="SMR" id="Q1JN32"/>
<dbReference type="GeneID" id="69901300"/>
<dbReference type="KEGG" id="spk:MGAS9429_Spy0379"/>
<dbReference type="HOGENOM" id="CLU_033861_0_0_9"/>
<dbReference type="UniPathway" id="UPA00159">
    <property type="reaction ID" value="UER00275"/>
</dbReference>
<dbReference type="Proteomes" id="UP000002433">
    <property type="component" value="Chromosome"/>
</dbReference>
<dbReference type="GO" id="GO:0005737">
    <property type="term" value="C:cytoplasm"/>
    <property type="evidence" value="ECO:0007669"/>
    <property type="project" value="UniProtKB-SubCell"/>
</dbReference>
<dbReference type="GO" id="GO:0005524">
    <property type="term" value="F:ATP binding"/>
    <property type="evidence" value="ECO:0007669"/>
    <property type="project" value="UniProtKB-KW"/>
</dbReference>
<dbReference type="GO" id="GO:0033862">
    <property type="term" value="F:UMP kinase activity"/>
    <property type="evidence" value="ECO:0007669"/>
    <property type="project" value="UniProtKB-EC"/>
</dbReference>
<dbReference type="GO" id="GO:0044210">
    <property type="term" value="P:'de novo' CTP biosynthetic process"/>
    <property type="evidence" value="ECO:0007669"/>
    <property type="project" value="UniProtKB-UniRule"/>
</dbReference>
<dbReference type="GO" id="GO:0006225">
    <property type="term" value="P:UDP biosynthetic process"/>
    <property type="evidence" value="ECO:0007669"/>
    <property type="project" value="TreeGrafter"/>
</dbReference>
<dbReference type="CDD" id="cd04254">
    <property type="entry name" value="AAK_UMPK-PyrH-Ec"/>
    <property type="match status" value="1"/>
</dbReference>
<dbReference type="FunFam" id="3.40.1160.10:FF:000019">
    <property type="entry name" value="Uridylate kinase"/>
    <property type="match status" value="1"/>
</dbReference>
<dbReference type="Gene3D" id="3.40.1160.10">
    <property type="entry name" value="Acetylglutamate kinase-like"/>
    <property type="match status" value="1"/>
</dbReference>
<dbReference type="HAMAP" id="MF_01220_B">
    <property type="entry name" value="PyrH_B"/>
    <property type="match status" value="1"/>
</dbReference>
<dbReference type="InterPro" id="IPR036393">
    <property type="entry name" value="AceGlu_kinase-like_sf"/>
</dbReference>
<dbReference type="InterPro" id="IPR001048">
    <property type="entry name" value="Asp/Glu/Uridylate_kinase"/>
</dbReference>
<dbReference type="InterPro" id="IPR011817">
    <property type="entry name" value="Uridylate_kinase"/>
</dbReference>
<dbReference type="InterPro" id="IPR015963">
    <property type="entry name" value="Uridylate_kinase_bac"/>
</dbReference>
<dbReference type="NCBIfam" id="TIGR02075">
    <property type="entry name" value="pyrH_bact"/>
    <property type="match status" value="1"/>
</dbReference>
<dbReference type="PANTHER" id="PTHR42833">
    <property type="entry name" value="URIDYLATE KINASE"/>
    <property type="match status" value="1"/>
</dbReference>
<dbReference type="PANTHER" id="PTHR42833:SF4">
    <property type="entry name" value="URIDYLATE KINASE PUMPKIN, CHLOROPLASTIC"/>
    <property type="match status" value="1"/>
</dbReference>
<dbReference type="Pfam" id="PF00696">
    <property type="entry name" value="AA_kinase"/>
    <property type="match status" value="1"/>
</dbReference>
<dbReference type="PIRSF" id="PIRSF005650">
    <property type="entry name" value="Uridylate_kin"/>
    <property type="match status" value="1"/>
</dbReference>
<dbReference type="SUPFAM" id="SSF53633">
    <property type="entry name" value="Carbamate kinase-like"/>
    <property type="match status" value="1"/>
</dbReference>
<organism>
    <name type="scientific">Streptococcus pyogenes serotype M12 (strain MGAS9429)</name>
    <dbReference type="NCBI Taxonomy" id="370551"/>
    <lineage>
        <taxon>Bacteria</taxon>
        <taxon>Bacillati</taxon>
        <taxon>Bacillota</taxon>
        <taxon>Bacilli</taxon>
        <taxon>Lactobacillales</taxon>
        <taxon>Streptococcaceae</taxon>
        <taxon>Streptococcus</taxon>
    </lineage>
</organism>
<feature type="chain" id="PRO_1000054033" description="Uridylate kinase">
    <location>
        <begin position="1"/>
        <end position="242"/>
    </location>
</feature>
<feature type="region of interest" description="Involved in allosteric activation by GTP" evidence="1">
    <location>
        <begin position="19"/>
        <end position="24"/>
    </location>
</feature>
<feature type="binding site" evidence="1">
    <location>
        <begin position="11"/>
        <end position="14"/>
    </location>
    <ligand>
        <name>ATP</name>
        <dbReference type="ChEBI" id="CHEBI:30616"/>
    </ligand>
</feature>
<feature type="binding site" evidence="1">
    <location>
        <position position="53"/>
    </location>
    <ligand>
        <name>UMP</name>
        <dbReference type="ChEBI" id="CHEBI:57865"/>
    </ligand>
</feature>
<feature type="binding site" evidence="1">
    <location>
        <position position="54"/>
    </location>
    <ligand>
        <name>ATP</name>
        <dbReference type="ChEBI" id="CHEBI:30616"/>
    </ligand>
</feature>
<feature type="binding site" evidence="1">
    <location>
        <position position="58"/>
    </location>
    <ligand>
        <name>ATP</name>
        <dbReference type="ChEBI" id="CHEBI:30616"/>
    </ligand>
</feature>
<feature type="binding site" evidence="1">
    <location>
        <position position="73"/>
    </location>
    <ligand>
        <name>UMP</name>
        <dbReference type="ChEBI" id="CHEBI:57865"/>
    </ligand>
</feature>
<feature type="binding site" evidence="1">
    <location>
        <begin position="134"/>
        <end position="141"/>
    </location>
    <ligand>
        <name>UMP</name>
        <dbReference type="ChEBI" id="CHEBI:57865"/>
    </ligand>
</feature>
<feature type="binding site" evidence="1">
    <location>
        <position position="162"/>
    </location>
    <ligand>
        <name>ATP</name>
        <dbReference type="ChEBI" id="CHEBI:30616"/>
    </ligand>
</feature>
<feature type="binding site" evidence="1">
    <location>
        <position position="168"/>
    </location>
    <ligand>
        <name>ATP</name>
        <dbReference type="ChEBI" id="CHEBI:30616"/>
    </ligand>
</feature>
<feature type="binding site" evidence="1">
    <location>
        <position position="171"/>
    </location>
    <ligand>
        <name>ATP</name>
        <dbReference type="ChEBI" id="CHEBI:30616"/>
    </ligand>
</feature>
<name>PYRH_STRPC</name>
<gene>
    <name evidence="1" type="primary">pyrH</name>
    <name type="ordered locus">MGAS9429_Spy0379</name>
</gene>
<evidence type="ECO:0000255" key="1">
    <source>
        <dbReference type="HAMAP-Rule" id="MF_01220"/>
    </source>
</evidence>
<protein>
    <recommendedName>
        <fullName evidence="1">Uridylate kinase</fullName>
        <shortName evidence="1">UK</shortName>
        <ecNumber evidence="1">2.7.4.22</ecNumber>
    </recommendedName>
    <alternativeName>
        <fullName evidence="1">Uridine monophosphate kinase</fullName>
        <shortName evidence="1">UMP kinase</shortName>
        <shortName evidence="1">UMPK</shortName>
    </alternativeName>
</protein>